<protein>
    <recommendedName>
        <fullName>Myosin light chain alkali</fullName>
    </recommendedName>
</protein>
<feature type="chain" id="PRO_0000198708" description="Myosin light chain alkali">
    <location>
        <begin position="1" status="less than"/>
        <end position="82"/>
    </location>
</feature>
<feature type="domain" description="EF-hand" evidence="1">
    <location>
        <begin position="7"/>
        <end position="42"/>
    </location>
</feature>
<feature type="splice variant" id="VSP_003366" description="In isoform Indirect flight muscle." evidence="2">
    <original>QFVQRLMSDPVVFD</original>
    <variation>PFLARMCERPDQLK</variation>
    <location>
        <begin position="69"/>
        <end position="82"/>
    </location>
</feature>
<feature type="non-terminal residue">
    <location>
        <position position="1"/>
    </location>
</feature>
<name>MLC1_DROMA</name>
<accession>Q24399</accession>
<accession>Q24398</accession>
<organism>
    <name type="scientific">Drosophila mauritiana</name>
    <name type="common">Fruit fly</name>
    <dbReference type="NCBI Taxonomy" id="7226"/>
    <lineage>
        <taxon>Eukaryota</taxon>
        <taxon>Metazoa</taxon>
        <taxon>Ecdysozoa</taxon>
        <taxon>Arthropoda</taxon>
        <taxon>Hexapoda</taxon>
        <taxon>Insecta</taxon>
        <taxon>Pterygota</taxon>
        <taxon>Neoptera</taxon>
        <taxon>Endopterygota</taxon>
        <taxon>Diptera</taxon>
        <taxon>Brachycera</taxon>
        <taxon>Muscomorpha</taxon>
        <taxon>Ephydroidea</taxon>
        <taxon>Drosophilidae</taxon>
        <taxon>Drosophila</taxon>
        <taxon>Sophophora</taxon>
    </lineage>
</organism>
<gene>
    <name type="primary">Mlc1</name>
</gene>
<dbReference type="EMBL" id="L49006">
    <property type="protein sequence ID" value="AAC37268.1"/>
    <property type="molecule type" value="Genomic_DNA"/>
</dbReference>
<dbReference type="EMBL" id="L49006">
    <property type="protein sequence ID" value="AAC37269.1"/>
    <property type="molecule type" value="Genomic_DNA"/>
</dbReference>
<dbReference type="SMR" id="Q24399"/>
<dbReference type="EnsemblMetazoa" id="XM_033310696.1">
    <property type="protein sequence ID" value="XP_033166587.1"/>
    <property type="gene ID" value="LOC117145155"/>
</dbReference>
<dbReference type="Proteomes" id="UP000515162">
    <property type="component" value="Unplaced"/>
</dbReference>
<dbReference type="GO" id="GO:0005859">
    <property type="term" value="C:muscle myosin complex"/>
    <property type="evidence" value="ECO:0000250"/>
    <property type="project" value="UniProtKB"/>
</dbReference>
<dbReference type="GO" id="GO:0005509">
    <property type="term" value="F:calcium ion binding"/>
    <property type="evidence" value="ECO:0007669"/>
    <property type="project" value="InterPro"/>
</dbReference>
<dbReference type="FunFam" id="1.10.238.10:FF:000267">
    <property type="entry name" value="Myosin light chain alkali"/>
    <property type="match status" value="1"/>
</dbReference>
<dbReference type="Gene3D" id="1.10.238.10">
    <property type="entry name" value="EF-hand"/>
    <property type="match status" value="1"/>
</dbReference>
<dbReference type="InterPro" id="IPR050230">
    <property type="entry name" value="CALM/Myosin/TropC-like"/>
</dbReference>
<dbReference type="InterPro" id="IPR011992">
    <property type="entry name" value="EF-hand-dom_pair"/>
</dbReference>
<dbReference type="InterPro" id="IPR002048">
    <property type="entry name" value="EF_hand_dom"/>
</dbReference>
<dbReference type="PANTHER" id="PTHR23048">
    <property type="entry name" value="MYOSIN LIGHT CHAIN 1, 3"/>
    <property type="match status" value="1"/>
</dbReference>
<dbReference type="PANTHER" id="PTHR23048:SF33">
    <property type="entry name" value="MYOSIN LIGHT CHAIN ALKALI"/>
    <property type="match status" value="1"/>
</dbReference>
<dbReference type="Pfam" id="PF13499">
    <property type="entry name" value="EF-hand_7"/>
    <property type="match status" value="1"/>
</dbReference>
<dbReference type="SUPFAM" id="SSF47473">
    <property type="entry name" value="EF-hand"/>
    <property type="match status" value="1"/>
</dbReference>
<dbReference type="PROSITE" id="PS50222">
    <property type="entry name" value="EF_HAND_2"/>
    <property type="match status" value="1"/>
</dbReference>
<reference key="1">
    <citation type="journal article" date="1996" name="Mol. Biol. Evol.">
        <title>Length variation and secondary structure of introns in the Mlc1 gene in six species of Drosophila.</title>
        <authorList>
            <person name="Clark A.G."/>
            <person name="Leicht B.G."/>
            <person name="Muse S.V."/>
        </authorList>
    </citation>
    <scope>NUCLEOTIDE SEQUENCE [GENOMIC DNA]</scope>
    <scope>ALTERNATIVE SPLICING</scope>
</reference>
<proteinExistence type="predicted"/>
<comment type="subunit">
    <text>Myosin is a hexamer of 2 heavy chains and 4 light chains.</text>
</comment>
<comment type="alternative products">
    <event type="alternative splicing"/>
    <isoform>
        <id>Q24399-1</id>
        <name>Larval-adult</name>
        <name>Larval-non-IFM</name>
        <sequence type="displayed"/>
    </isoform>
    <isoform>
        <id>Q24399-2</id>
        <name>Indirect flight muscle</name>
        <name>Pupa</name>
        <name>Adult flight muscle</name>
        <sequence type="described" ref="VSP_003366"/>
    </isoform>
</comment>
<evidence type="ECO:0000255" key="1">
    <source>
        <dbReference type="PROSITE-ProRule" id="PRU00448"/>
    </source>
</evidence>
<evidence type="ECO:0000305" key="2"/>
<keyword id="KW-0025">Alternative splicing</keyword>
<keyword id="KW-0505">Motor protein</keyword>
<keyword id="KW-0514">Muscle protein</keyword>
<keyword id="KW-0518">Myosin</keyword>
<keyword id="KW-0677">Repeat</keyword>
<sequence>KKEKEQGCYEDFIECLKLYDKEENGTMMLAELQHALLALGESLDDEQVETLFADCMDPEDDEGFIPYSQFVQRLMSDPVVFD</sequence>